<name>EIF3C_DROYA</name>
<keyword id="KW-0963">Cytoplasm</keyword>
<keyword id="KW-0396">Initiation factor</keyword>
<keyword id="KW-0597">Phosphoprotein</keyword>
<keyword id="KW-0648">Protein biosynthesis</keyword>
<gene>
    <name evidence="1" type="primary">eIF3c</name>
    <name evidence="1" type="synonym">eIF3-S8</name>
    <name type="ORF">GE11882</name>
</gene>
<proteinExistence type="inferred from homology"/>
<feature type="chain" id="PRO_0000365395" description="Eukaryotic translation initiation factor 3 subunit C">
    <location>
        <begin position="1"/>
        <end position="910"/>
    </location>
</feature>
<feature type="domain" description="PCI" evidence="2">
    <location>
        <begin position="639"/>
        <end position="815"/>
    </location>
</feature>
<feature type="region of interest" description="Disordered" evidence="3">
    <location>
        <begin position="1"/>
        <end position="21"/>
    </location>
</feature>
<feature type="region of interest" description="Disordered" evidence="3">
    <location>
        <begin position="157"/>
        <end position="281"/>
    </location>
</feature>
<feature type="region of interest" description="Disordered" evidence="3">
    <location>
        <begin position="847"/>
        <end position="910"/>
    </location>
</feature>
<feature type="compositionally biased region" description="Acidic residues" evidence="3">
    <location>
        <begin position="11"/>
        <end position="20"/>
    </location>
</feature>
<feature type="compositionally biased region" description="Acidic residues" evidence="3">
    <location>
        <begin position="162"/>
        <end position="186"/>
    </location>
</feature>
<feature type="compositionally biased region" description="Low complexity" evidence="3">
    <location>
        <begin position="193"/>
        <end position="207"/>
    </location>
</feature>
<feature type="compositionally biased region" description="Acidic residues" evidence="3">
    <location>
        <begin position="209"/>
        <end position="235"/>
    </location>
</feature>
<feature type="compositionally biased region" description="Basic and acidic residues" evidence="3">
    <location>
        <begin position="240"/>
        <end position="268"/>
    </location>
</feature>
<feature type="compositionally biased region" description="Low complexity" evidence="3">
    <location>
        <begin position="862"/>
        <end position="874"/>
    </location>
</feature>
<feature type="compositionally biased region" description="Basic residues" evidence="3">
    <location>
        <begin position="882"/>
        <end position="891"/>
    </location>
</feature>
<feature type="compositionally biased region" description="Low complexity" evidence="3">
    <location>
        <begin position="895"/>
        <end position="910"/>
    </location>
</feature>
<feature type="modified residue" description="Phosphoserine" evidence="1">
    <location>
        <position position="34"/>
    </location>
</feature>
<feature type="modified residue" description="Phosphoserine" evidence="1">
    <location>
        <position position="165"/>
    </location>
</feature>
<feature type="modified residue" description="Phosphoserine" evidence="1">
    <location>
        <position position="176"/>
    </location>
</feature>
<feature type="modified residue" description="Phosphoserine" evidence="1">
    <location>
        <position position="185"/>
    </location>
</feature>
<evidence type="ECO:0000255" key="1">
    <source>
        <dbReference type="HAMAP-Rule" id="MF_03002"/>
    </source>
</evidence>
<evidence type="ECO:0000255" key="2">
    <source>
        <dbReference type="PROSITE-ProRule" id="PRU01185"/>
    </source>
</evidence>
<evidence type="ECO:0000256" key="3">
    <source>
        <dbReference type="SAM" id="MobiDB-lite"/>
    </source>
</evidence>
<sequence length="910" mass="105792">MSRFFANGSDSESESSEDEIQATNFNKASAFQFSDDEEEVKRVVRSTKEKRYENLTSIIKTIRNHKKIKDIPNTLSSFEDLTRAYQKALPVISKEENGITPRFYIRCLAELEDFINEVWEDREGRKNLSKNNSKSLGTLRQKVRKYIKDFEDDLSRFREAPDQESEAEDEVVAQESDGGDAGDDSDAGVKPTEAAPKAVKSAPAKAAPADDDDSDDSIDWDSDSESETESSDDENQYQNMRERFLKRTTEKEEKDDDKRKDKRKEQKVKIRKRAEDDEDGEWETVVKGHVVEKPKMFEKDAEIDVPLVLAKLLEIMSARGKKRTDRRLQIDLLFELRDISDQHNLGTAVSVKIHFNIISAIYDYNQKISEPMKLEHWALLLEVMQSMLKLLLANTDIIMSESVAEEHEEYVTAPFYVRGCPLAAVERLDDEFVKLLKECDPHSNDYVSRLKDEVNVVKTIELVLQYFERSGTNNERCRIYLRKIEHLYYKFDPEVLKKKRNEVPATTSTSVDVMDKLCKFIYAKDDTDRIRTRAILAHIYHHAMHDNWFQARDLVLMSHLQDNIDAADPATRILYNRMMANLGLCAFRQENVKDAHHCLVDLMVTGKPKELLAQGLLPQRQHERSAEQEKIEKQRQMPFHMHINLELLECVYLVSAMLLEIPYIAAHEFDARRRMISKTFYQQLRSSERQSLVGPPESMREHVVAAAKAMRCGNWQACANFIVNKKMNTKVWDLFYESDRVREMLTKFIKEESLRTYLFTYSNVYTSISIPSLAQMYELPVPKVHSIISKMIINEELMASLDDPSETVVMHRSEPSRLQALAMQFVDKVTNLVDVNEKVFDMKQGNFFQRGNMGNRGDRGYNRNQNNQGGNWLGQRRDRNNRNRNQRGHHKNNQDRQQQQQQQVQTIDEE</sequence>
<accession>B4P562</accession>
<comment type="function">
    <text evidence="1">Component of the eukaryotic translation initiation factor 3 (eIF-3) complex, which is involved in protein synthesis of a specialized repertoire of mRNAs and, together with other initiation factors, stimulates binding of mRNA and methionyl-tRNAi to the 40S ribosome. The eIF-3 complex specifically targets and initiates translation of a subset of mRNAs involved in cell proliferation.</text>
</comment>
<comment type="subunit">
    <text evidence="1">Component of the eukaryotic translation initiation factor 3 (eIF-3) complex. The eIF-3 complex interacts with pix.</text>
</comment>
<comment type="subcellular location">
    <subcellularLocation>
        <location evidence="1">Cytoplasm</location>
    </subcellularLocation>
</comment>
<comment type="similarity">
    <text evidence="1">Belongs to the eIF-3 subunit C family.</text>
</comment>
<organism>
    <name type="scientific">Drosophila yakuba</name>
    <name type="common">Fruit fly</name>
    <dbReference type="NCBI Taxonomy" id="7245"/>
    <lineage>
        <taxon>Eukaryota</taxon>
        <taxon>Metazoa</taxon>
        <taxon>Ecdysozoa</taxon>
        <taxon>Arthropoda</taxon>
        <taxon>Hexapoda</taxon>
        <taxon>Insecta</taxon>
        <taxon>Pterygota</taxon>
        <taxon>Neoptera</taxon>
        <taxon>Endopterygota</taxon>
        <taxon>Diptera</taxon>
        <taxon>Brachycera</taxon>
        <taxon>Muscomorpha</taxon>
        <taxon>Ephydroidea</taxon>
        <taxon>Drosophilidae</taxon>
        <taxon>Drosophila</taxon>
        <taxon>Sophophora</taxon>
    </lineage>
</organism>
<dbReference type="EMBL" id="CM000158">
    <property type="protein sequence ID" value="EDW91763.1"/>
    <property type="molecule type" value="Genomic_DNA"/>
</dbReference>
<dbReference type="SMR" id="B4P562"/>
<dbReference type="EnsemblMetazoa" id="FBtr0258400">
    <property type="protein sequence ID" value="FBpp0256892"/>
    <property type="gene ID" value="FBgn0229666"/>
</dbReference>
<dbReference type="EnsemblMetazoa" id="XM_002092015.3">
    <property type="protein sequence ID" value="XP_002092051.1"/>
    <property type="gene ID" value="LOC6531239"/>
</dbReference>
<dbReference type="EnsemblMetazoa" id="XM_039371970.1">
    <property type="protein sequence ID" value="XP_039227904.1"/>
    <property type="gene ID" value="LOC6531239"/>
</dbReference>
<dbReference type="GeneID" id="6531239"/>
<dbReference type="KEGG" id="dya:Dyak_GE11882"/>
<dbReference type="CTD" id="8663"/>
<dbReference type="eggNOG" id="KOG1076">
    <property type="taxonomic scope" value="Eukaryota"/>
</dbReference>
<dbReference type="HOGENOM" id="CLU_004304_0_0_1"/>
<dbReference type="OMA" id="FRCGLIK"/>
<dbReference type="OrthoDB" id="29647at2759"/>
<dbReference type="PhylomeDB" id="B4P562"/>
<dbReference type="ChiTaRS" id="eIF3-S8">
    <property type="organism name" value="fly"/>
</dbReference>
<dbReference type="Proteomes" id="UP000002282">
    <property type="component" value="Chromosome 2R"/>
</dbReference>
<dbReference type="GO" id="GO:0016282">
    <property type="term" value="C:eukaryotic 43S preinitiation complex"/>
    <property type="evidence" value="ECO:0007669"/>
    <property type="project" value="UniProtKB-UniRule"/>
</dbReference>
<dbReference type="GO" id="GO:0033290">
    <property type="term" value="C:eukaryotic 48S preinitiation complex"/>
    <property type="evidence" value="ECO:0007669"/>
    <property type="project" value="UniProtKB-UniRule"/>
</dbReference>
<dbReference type="GO" id="GO:0005852">
    <property type="term" value="C:eukaryotic translation initiation factor 3 complex"/>
    <property type="evidence" value="ECO:0007669"/>
    <property type="project" value="UniProtKB-UniRule"/>
</dbReference>
<dbReference type="GO" id="GO:0003723">
    <property type="term" value="F:RNA binding"/>
    <property type="evidence" value="ECO:0007669"/>
    <property type="project" value="InterPro"/>
</dbReference>
<dbReference type="GO" id="GO:0003743">
    <property type="term" value="F:translation initiation factor activity"/>
    <property type="evidence" value="ECO:0007669"/>
    <property type="project" value="UniProtKB-UniRule"/>
</dbReference>
<dbReference type="GO" id="GO:0031369">
    <property type="term" value="F:translation initiation factor binding"/>
    <property type="evidence" value="ECO:0007669"/>
    <property type="project" value="InterPro"/>
</dbReference>
<dbReference type="GO" id="GO:0001732">
    <property type="term" value="P:formation of cytoplasmic translation initiation complex"/>
    <property type="evidence" value="ECO:0007669"/>
    <property type="project" value="UniProtKB-UniRule"/>
</dbReference>
<dbReference type="FunFam" id="1.10.10.10:FF:000300">
    <property type="entry name" value="Eukaryotic translation initiation factor 3 subunit C"/>
    <property type="match status" value="1"/>
</dbReference>
<dbReference type="Gene3D" id="1.25.40.570">
    <property type="match status" value="1"/>
</dbReference>
<dbReference type="HAMAP" id="MF_03002">
    <property type="entry name" value="eIF3c"/>
    <property type="match status" value="1"/>
</dbReference>
<dbReference type="InterPro" id="IPR027516">
    <property type="entry name" value="EIF3C"/>
</dbReference>
<dbReference type="InterPro" id="IPR008905">
    <property type="entry name" value="EIF3C_N_dom"/>
</dbReference>
<dbReference type="InterPro" id="IPR000717">
    <property type="entry name" value="PCI_dom"/>
</dbReference>
<dbReference type="InterPro" id="IPR036390">
    <property type="entry name" value="WH_DNA-bd_sf"/>
</dbReference>
<dbReference type="PANTHER" id="PTHR13937">
    <property type="entry name" value="EUKARYOTIC TRANSLATION INITATION FACTOR 3, SUBUNIT 8 EIF3S8 -RELATED"/>
    <property type="match status" value="1"/>
</dbReference>
<dbReference type="PANTHER" id="PTHR13937:SF0">
    <property type="entry name" value="EUKARYOTIC TRANSLATION INITIATION FACTOR 3 SUBUNIT C-RELATED"/>
    <property type="match status" value="1"/>
</dbReference>
<dbReference type="Pfam" id="PF05470">
    <property type="entry name" value="eIF-3c_N"/>
    <property type="match status" value="1"/>
</dbReference>
<dbReference type="Pfam" id="PF01399">
    <property type="entry name" value="PCI"/>
    <property type="match status" value="1"/>
</dbReference>
<dbReference type="SMART" id="SM00088">
    <property type="entry name" value="PINT"/>
    <property type="match status" value="1"/>
</dbReference>
<dbReference type="SUPFAM" id="SSF46785">
    <property type="entry name" value="Winged helix' DNA-binding domain"/>
    <property type="match status" value="1"/>
</dbReference>
<dbReference type="PROSITE" id="PS50250">
    <property type="entry name" value="PCI"/>
    <property type="match status" value="1"/>
</dbReference>
<reference key="1">
    <citation type="journal article" date="2007" name="Nature">
        <title>Evolution of genes and genomes on the Drosophila phylogeny.</title>
        <authorList>
            <consortium name="Drosophila 12 genomes consortium"/>
        </authorList>
    </citation>
    <scope>NUCLEOTIDE SEQUENCE [LARGE SCALE GENOMIC DNA]</scope>
    <source>
        <strain>Tai18E2 / Tucson 14021-0261.01</strain>
    </source>
</reference>
<protein>
    <recommendedName>
        <fullName evidence="1">Eukaryotic translation initiation factor 3 subunit C</fullName>
        <shortName evidence="1">eIF3c</shortName>
    </recommendedName>
    <alternativeName>
        <fullName evidence="1">Eukaryotic translation initiation factor 3 subunit 8</fullName>
    </alternativeName>
</protein>